<dbReference type="EMBL" id="AB053350">
    <property type="protein sequence ID" value="BAB20890.1"/>
    <property type="molecule type" value="mRNA"/>
</dbReference>
<dbReference type="RefSeq" id="NP_001075290.1">
    <property type="nucleotide sequence ID" value="NM_001081821.2"/>
</dbReference>
<dbReference type="SMR" id="Q9GKR0"/>
<dbReference type="FunCoup" id="Q9GKR0">
    <property type="interactions" value="553"/>
</dbReference>
<dbReference type="STRING" id="9796.ENSECAP00000007544"/>
<dbReference type="GlyCosmos" id="Q9GKR0">
    <property type="glycosylation" value="1 site, No reported glycans"/>
</dbReference>
<dbReference type="PaxDb" id="9796-ENSECAP00000007544"/>
<dbReference type="GeneID" id="100033839"/>
<dbReference type="KEGG" id="ecb:100033839"/>
<dbReference type="CTD" id="7422"/>
<dbReference type="HOGENOM" id="CLU_042996_2_0_1"/>
<dbReference type="InParanoid" id="Q9GKR0"/>
<dbReference type="OrthoDB" id="6370328at2759"/>
<dbReference type="Proteomes" id="UP000002281">
    <property type="component" value="Unplaced"/>
</dbReference>
<dbReference type="GO" id="GO:0005615">
    <property type="term" value="C:extracellular space"/>
    <property type="evidence" value="ECO:0000318"/>
    <property type="project" value="GO_Central"/>
</dbReference>
<dbReference type="GO" id="GO:0016020">
    <property type="term" value="C:membrane"/>
    <property type="evidence" value="ECO:0007669"/>
    <property type="project" value="InterPro"/>
</dbReference>
<dbReference type="GO" id="GO:0042056">
    <property type="term" value="F:chemoattractant activity"/>
    <property type="evidence" value="ECO:0000318"/>
    <property type="project" value="GO_Central"/>
</dbReference>
<dbReference type="GO" id="GO:0008083">
    <property type="term" value="F:growth factor activity"/>
    <property type="evidence" value="ECO:0000318"/>
    <property type="project" value="GO_Central"/>
</dbReference>
<dbReference type="GO" id="GO:0008201">
    <property type="term" value="F:heparin binding"/>
    <property type="evidence" value="ECO:0007669"/>
    <property type="project" value="InterPro"/>
</dbReference>
<dbReference type="GO" id="GO:0005172">
    <property type="term" value="F:vascular endothelial growth factor receptor binding"/>
    <property type="evidence" value="ECO:0000318"/>
    <property type="project" value="GO_Central"/>
</dbReference>
<dbReference type="GO" id="GO:0050930">
    <property type="term" value="P:induction of positive chemotaxis"/>
    <property type="evidence" value="ECO:0000318"/>
    <property type="project" value="GO_Central"/>
</dbReference>
<dbReference type="GO" id="GO:0097475">
    <property type="term" value="P:motor neuron migration"/>
    <property type="evidence" value="ECO:0000250"/>
    <property type="project" value="UniProtKB"/>
</dbReference>
<dbReference type="GO" id="GO:0045766">
    <property type="term" value="P:positive regulation of angiogenesis"/>
    <property type="evidence" value="ECO:0000250"/>
    <property type="project" value="UniProtKB"/>
</dbReference>
<dbReference type="GO" id="GO:0051781">
    <property type="term" value="P:positive regulation of cell division"/>
    <property type="evidence" value="ECO:0007669"/>
    <property type="project" value="UniProtKB-KW"/>
</dbReference>
<dbReference type="GO" id="GO:0010595">
    <property type="term" value="P:positive regulation of endothelial cell migration"/>
    <property type="evidence" value="ECO:0000250"/>
    <property type="project" value="UniProtKB"/>
</dbReference>
<dbReference type="GO" id="GO:0001938">
    <property type="term" value="P:positive regulation of endothelial cell proliferation"/>
    <property type="evidence" value="ECO:0000250"/>
    <property type="project" value="UniProtKB"/>
</dbReference>
<dbReference type="GO" id="GO:0051894">
    <property type="term" value="P:positive regulation of focal adhesion assembly"/>
    <property type="evidence" value="ECO:0000250"/>
    <property type="project" value="UniProtKB"/>
</dbReference>
<dbReference type="GO" id="GO:0060754">
    <property type="term" value="P:positive regulation of mast cell chemotaxis"/>
    <property type="evidence" value="ECO:0000318"/>
    <property type="project" value="GO_Central"/>
</dbReference>
<dbReference type="GO" id="GO:0050731">
    <property type="term" value="P:positive regulation of peptidyl-tyrosine phosphorylation"/>
    <property type="evidence" value="ECO:0000250"/>
    <property type="project" value="UniProtKB"/>
</dbReference>
<dbReference type="GO" id="GO:0001934">
    <property type="term" value="P:positive regulation of protein phosphorylation"/>
    <property type="evidence" value="ECO:0000250"/>
    <property type="project" value="UniProtKB"/>
</dbReference>
<dbReference type="GO" id="GO:0031334">
    <property type="term" value="P:positive regulation of protein-containing complex assembly"/>
    <property type="evidence" value="ECO:0000250"/>
    <property type="project" value="UniProtKB"/>
</dbReference>
<dbReference type="GO" id="GO:0001666">
    <property type="term" value="P:response to hypoxia"/>
    <property type="evidence" value="ECO:0000318"/>
    <property type="project" value="GO_Central"/>
</dbReference>
<dbReference type="GO" id="GO:0002040">
    <property type="term" value="P:sprouting angiogenesis"/>
    <property type="evidence" value="ECO:0000318"/>
    <property type="project" value="GO_Central"/>
</dbReference>
<dbReference type="GO" id="GO:0035148">
    <property type="term" value="P:tube formation"/>
    <property type="evidence" value="ECO:0000250"/>
    <property type="project" value="UniProtKB"/>
</dbReference>
<dbReference type="GO" id="GO:0048010">
    <property type="term" value="P:vascular endothelial growth factor receptor signaling pathway"/>
    <property type="evidence" value="ECO:0000318"/>
    <property type="project" value="GO_Central"/>
</dbReference>
<dbReference type="GO" id="GO:0038084">
    <property type="term" value="P:vascular endothelial growth factor signaling pathway"/>
    <property type="evidence" value="ECO:0000318"/>
    <property type="project" value="GO_Central"/>
</dbReference>
<dbReference type="CDD" id="cd00135">
    <property type="entry name" value="PDGF"/>
    <property type="match status" value="1"/>
</dbReference>
<dbReference type="FunFam" id="2.10.160.10:FF:000001">
    <property type="entry name" value="Vascular endothelial growth factor A"/>
    <property type="match status" value="1"/>
</dbReference>
<dbReference type="FunFam" id="2.10.90.10:FF:000009">
    <property type="entry name" value="Vascular endothelial growth factor A"/>
    <property type="match status" value="1"/>
</dbReference>
<dbReference type="Gene3D" id="2.10.90.10">
    <property type="entry name" value="Cystine-knot cytokines"/>
    <property type="match status" value="1"/>
</dbReference>
<dbReference type="Gene3D" id="2.10.160.10">
    <property type="entry name" value="Vascular endothelial growth factor, heparin-binding domain"/>
    <property type="match status" value="1"/>
</dbReference>
<dbReference type="InterPro" id="IPR029034">
    <property type="entry name" value="Cystine-knot_cytokine"/>
</dbReference>
<dbReference type="InterPro" id="IPR023581">
    <property type="entry name" value="PD_growth_factor_CS"/>
</dbReference>
<dbReference type="InterPro" id="IPR000072">
    <property type="entry name" value="PDGF/VEGF_dom"/>
</dbReference>
<dbReference type="InterPro" id="IPR050507">
    <property type="entry name" value="PDGF/VEGF_growth_factor"/>
</dbReference>
<dbReference type="InterPro" id="IPR027928">
    <property type="entry name" value="VEGF_C"/>
</dbReference>
<dbReference type="InterPro" id="IPR036841">
    <property type="entry name" value="VEGF_C_sf"/>
</dbReference>
<dbReference type="PANTHER" id="PTHR12025">
    <property type="entry name" value="VASCULAR ENDOTHELIAL GROWTH FACTOR"/>
    <property type="match status" value="1"/>
</dbReference>
<dbReference type="PANTHER" id="PTHR12025:SF5">
    <property type="entry name" value="VASCULAR ENDOTHELIAL GROWTH FACTOR A, LONG FORM"/>
    <property type="match status" value="1"/>
</dbReference>
<dbReference type="Pfam" id="PF00341">
    <property type="entry name" value="PDGF"/>
    <property type="match status" value="1"/>
</dbReference>
<dbReference type="Pfam" id="PF14554">
    <property type="entry name" value="VEGF_C"/>
    <property type="match status" value="1"/>
</dbReference>
<dbReference type="SMART" id="SM00141">
    <property type="entry name" value="PDGF"/>
    <property type="match status" value="1"/>
</dbReference>
<dbReference type="SUPFAM" id="SSF57501">
    <property type="entry name" value="Cystine-knot cytokines"/>
    <property type="match status" value="1"/>
</dbReference>
<dbReference type="SUPFAM" id="SSF57593">
    <property type="entry name" value="Heparin-binding domain from vascular endothelial growth factor"/>
    <property type="match status" value="1"/>
</dbReference>
<dbReference type="PROSITE" id="PS00249">
    <property type="entry name" value="PDGF_1"/>
    <property type="match status" value="1"/>
</dbReference>
<dbReference type="PROSITE" id="PS50278">
    <property type="entry name" value="PDGF_2"/>
    <property type="match status" value="1"/>
</dbReference>
<organism>
    <name type="scientific">Equus caballus</name>
    <name type="common">Horse</name>
    <dbReference type="NCBI Taxonomy" id="9796"/>
    <lineage>
        <taxon>Eukaryota</taxon>
        <taxon>Metazoa</taxon>
        <taxon>Chordata</taxon>
        <taxon>Craniata</taxon>
        <taxon>Vertebrata</taxon>
        <taxon>Euteleostomi</taxon>
        <taxon>Mammalia</taxon>
        <taxon>Eutheria</taxon>
        <taxon>Laurasiatheria</taxon>
        <taxon>Perissodactyla</taxon>
        <taxon>Equidae</taxon>
        <taxon>Equus</taxon>
    </lineage>
</organism>
<sequence>MNFLLSWVHWSLALLLYLHHAKWSQAAPMAEGEHKTHEVVKFMDVYQRSYCRPIETLVDIFQEYPDEIEYIFKPSCVPLMRCGGCCNDEGLECVPTAEFNITMQIMRIKPHQSQHIGEMSFLQHSKCECRPKKDKARQENPCGPCSERRKHLFVQDPQTCKCSCKNTDSRCKARQLELNERTCRCDKPRR</sequence>
<comment type="function">
    <text evidence="2 4">Growth factor active in angiogenesis, vasculogenesis and endothelial cell growth. Induces endothelial cell proliferation, promotes cell migration, inhibits apoptosis and induces permeabilization of blood vessels. Binds to the FLT1/VEGFR1 and KDR/VEGFR2 receptors, heparan sulfate and heparin (By similarity). Binding to NRP1 receptor initiates a signaling pathway needed for motor neuron axon guidance and cell body migration, including for the caudal migration of facial motor neurons from rhombomere 4 to rhombomere 6 during embryonic development (By similarity). Also binds the DEAR/FBXW7-AS1 receptor (By similarity).</text>
</comment>
<comment type="subunit">
    <text evidence="2 3">Homodimer; disulfide-linked (By similarity). Also found as heterodimer with PGF (By similarity). Interacts with NRP1. Interacts with isoform 2 of BSG. Interacts with CD82; this interaction inhibits VEGFA-mediated signaling pathway (By similarity).</text>
</comment>
<comment type="subcellular location">
    <subcellularLocation>
        <location evidence="1">Secreted</location>
    </subcellularLocation>
    <text evidence="1">Secreted but remains associated to cells or to the extracellular matrix unless released by heparin.</text>
</comment>
<comment type="similarity">
    <text evidence="6">Belongs to the PDGF/VEGF growth factor family.</text>
</comment>
<evidence type="ECO:0000250" key="1"/>
<evidence type="ECO:0000250" key="2">
    <source>
        <dbReference type="UniProtKB" id="P15692"/>
    </source>
</evidence>
<evidence type="ECO:0000250" key="3">
    <source>
        <dbReference type="UniProtKB" id="P16612"/>
    </source>
</evidence>
<evidence type="ECO:0000250" key="4">
    <source>
        <dbReference type="UniProtKB" id="Q00731"/>
    </source>
</evidence>
<evidence type="ECO:0000255" key="5"/>
<evidence type="ECO:0000305" key="6"/>
<protein>
    <recommendedName>
        <fullName>Vascular endothelial growth factor A</fullName>
        <shortName>VEGF-A</shortName>
    </recommendedName>
    <alternativeName>
        <fullName>Vascular permeability factor</fullName>
        <shortName>VPF</shortName>
    </alternativeName>
</protein>
<feature type="signal peptide" evidence="5">
    <location>
        <begin position="1"/>
        <end position="26"/>
    </location>
</feature>
<feature type="chain" id="PRO_0000023385" description="Vascular endothelial growth factor A">
    <location>
        <begin position="27"/>
        <end position="190"/>
    </location>
</feature>
<feature type="glycosylation site" description="N-linked (GlcNAc...) asparagine" evidence="5">
    <location>
        <position position="100"/>
    </location>
</feature>
<feature type="disulfide bond" evidence="1">
    <location>
        <begin position="51"/>
        <end position="93"/>
    </location>
</feature>
<feature type="disulfide bond" description="Interchain" evidence="1">
    <location>
        <position position="76"/>
    </location>
</feature>
<feature type="disulfide bond" evidence="1">
    <location>
        <begin position="82"/>
        <end position="127"/>
    </location>
</feature>
<feature type="disulfide bond" description="Interchain" evidence="1">
    <location>
        <position position="85"/>
    </location>
</feature>
<feature type="disulfide bond" evidence="1">
    <location>
        <begin position="86"/>
        <end position="129"/>
    </location>
</feature>
<accession>Q9GKR0</accession>
<proteinExistence type="evidence at transcript level"/>
<reference key="1">
    <citation type="submission" date="2001-01" db="EMBL/GenBank/DDBJ databases">
        <title>Cloning of cDNA and high-level expression of equine vascular endotherial growth factor (VEGF).</title>
        <authorList>
            <person name="Miura N."/>
            <person name="Misumi K."/>
            <person name="Kawahara K."/>
            <person name="Nakashima M."/>
            <person name="Fukumitsu S."/>
            <person name="Kawabata H."/>
            <person name="Uto N."/>
            <person name="Oka T."/>
            <person name="Maruyama I."/>
            <person name="Sakamoto H."/>
        </authorList>
    </citation>
    <scope>NUCLEOTIDE SEQUENCE [MRNA]</scope>
</reference>
<name>VEGFA_HORSE</name>
<keyword id="KW-0037">Angiogenesis</keyword>
<keyword id="KW-0217">Developmental protein</keyword>
<keyword id="KW-0221">Differentiation</keyword>
<keyword id="KW-1015">Disulfide bond</keyword>
<keyword id="KW-0325">Glycoprotein</keyword>
<keyword id="KW-0339">Growth factor</keyword>
<keyword id="KW-0497">Mitogen</keyword>
<keyword id="KW-1185">Reference proteome</keyword>
<keyword id="KW-0964">Secreted</keyword>
<keyword id="KW-0732">Signal</keyword>
<gene>
    <name type="primary">VEGFA</name>
    <name type="synonym">VEGF</name>
</gene>